<comment type="function">
    <text evidence="1">Required for cilia formation during embryonal development. Acts as a negative regulator of Shh signaling.</text>
</comment>
<comment type="subunit">
    <text evidence="1">Component of the IFT complex A (IFT-A) complex.</text>
</comment>
<comment type="subcellular location">
    <subcellularLocation>
        <location evidence="1">Cell projection</location>
        <location evidence="1">Cilium</location>
    </subcellularLocation>
    <subcellularLocation>
        <location evidence="1">Cytoplasm</location>
        <location evidence="1">Cytoskeleton</location>
        <location evidence="1">Cilium basal body</location>
    </subcellularLocation>
</comment>
<evidence type="ECO:0000250" key="1">
    <source>
        <dbReference type="UniProtKB" id="Q9HBG6"/>
    </source>
</evidence>
<organism>
    <name type="scientific">Xenopus tropicalis</name>
    <name type="common">Western clawed frog</name>
    <name type="synonym">Silurana tropicalis</name>
    <dbReference type="NCBI Taxonomy" id="8364"/>
    <lineage>
        <taxon>Eukaryota</taxon>
        <taxon>Metazoa</taxon>
        <taxon>Chordata</taxon>
        <taxon>Craniata</taxon>
        <taxon>Vertebrata</taxon>
        <taxon>Euteleostomi</taxon>
        <taxon>Amphibia</taxon>
        <taxon>Batrachia</taxon>
        <taxon>Anura</taxon>
        <taxon>Pipoidea</taxon>
        <taxon>Pipidae</taxon>
        <taxon>Xenopodinae</taxon>
        <taxon>Xenopus</taxon>
        <taxon>Silurana</taxon>
    </lineage>
</organism>
<protein>
    <recommendedName>
        <fullName>Intraflagellar transport protein 122 homolog</fullName>
    </recommendedName>
</protein>
<name>IF122_XENTR</name>
<proteinExistence type="evidence at transcript level"/>
<sequence length="1189" mass="136443">MRAVPTWVDKVHDRDKLEQSIYDLAFKPDGTQLIVAAGNRVLVYDTSDGTMIQPLKGHKDTVYCVAYAKDGKRFASGSADKSVIIWTSKLEGILKYTHNDSIQCVSYNPVTHQLASCSSSDFGLWSPEQKSVSKHKVSSKITCCSWTNDGQYLALGMFNGVVSIRNKNGEEKVKIERPGGALSPIWSICWNPSKDDHNDILAVADWGQKLSFYQLSGKQVGKDRVLGFDPCCVSYFSKGEYIIVSGSDKQVSLFTKDGVRLGPIGEQNSWVWTCRVKPDSNYVVIGCQDGTLAFYQLIFSTVHGLYKDRYAYRDSMTDVIVQHLITEQKVRIKCRELVKKIAIYKNRLAIQMPEKILIYELFSDDVNDMHYRVKEKIVKKFECNLLVVCSHHIILCQEKRLQCLSFKGVKEREWMMESLIRYIKVIGGPAGREGLLVGLKNGQILKIFVDNPFAITLLKQATSVRCLDMSASRNKLAVVDEHNTCLVYDITTKDLLFQEPNANSVAWNTQCEDMLCFSGGGYLNIKASNFPVHQQKLQGFVVGYNGSKIFCLHVYSMSAVEVPQSAPMYQYLERKMFREAYQIACLGVTDLDWKELAMEALEGLDFETAKKAFIRVRDLRYLELINSIEERKKRGDANDNLFLADVFAYQGKFHEAAKLYKKAGQESRALDMYTDLRMFEFAKEFLGSGDPKDTKTLITKQADWARNIREPRTAAEMYLSAGENMKAIELSGDHGWVDMLIEIARKLDKAEREPLLKCAYYFKKLQHHGYAAETYMKIGDLKALVRLYVETQRWEEAFALVEKNPEYKDEVYIPYAQWLAEHDRFEEAQKAFHKAGRQDEAVRVLEQLTHNAVVESRFNDAAYYYWMLSMQCLEISKDKEEKQDAMLQKFYHFQHLAELYHVYHSIHRYTDEPFSSHLPETLFNISRFLLHSLTKESPLGISKVNTLFTLAKQSKALGAYKLARQVYERLQGLRIPSRFLESIELGSITIRSKPFHDSEELIPMCYRCSTNNPFLNNLGNVCINCRQRFVFSASSYEVLPLVEFYLEDGISDEEAVSLVDLEAPRSSSKADSWREMSSGDTQTLRLDDGDDMMTYDPFTAKLSFEQGGSEFVPVVVNRAVLRTMSRRDVLIKRWPLPLKWQYFRSLLPDVSITMCPSCFQMFHTEDYELLVLQHNCCPYCRRPIEESSQ</sequence>
<accession>A8WGF4</accession>
<gene>
    <name type="primary">ift122</name>
</gene>
<feature type="chain" id="PRO_0000398818" description="Intraflagellar transport protein 122 homolog">
    <location>
        <begin position="1"/>
        <end position="1189"/>
    </location>
</feature>
<feature type="repeat" description="WD 1">
    <location>
        <begin position="16"/>
        <end position="54"/>
    </location>
</feature>
<feature type="repeat" description="WD 2">
    <location>
        <begin position="57"/>
        <end position="97"/>
    </location>
</feature>
<feature type="repeat" description="WD 3">
    <location>
        <begin position="99"/>
        <end position="135"/>
    </location>
</feature>
<feature type="repeat" description="WD 4">
    <location>
        <begin position="137"/>
        <end position="175"/>
    </location>
</feature>
<feature type="repeat" description="WD 5">
    <location>
        <begin position="180"/>
        <end position="223"/>
    </location>
</feature>
<feature type="repeat" description="WD 6">
    <location>
        <begin position="225"/>
        <end position="264"/>
    </location>
</feature>
<feature type="repeat" description="WD 7">
    <location>
        <begin position="266"/>
        <end position="306"/>
    </location>
</feature>
<feature type="repeat" description="WD 8">
    <location>
        <begin position="459"/>
        <end position="498"/>
    </location>
</feature>
<dbReference type="EMBL" id="BC154689">
    <property type="protein sequence ID" value="AAI54690.1"/>
    <property type="molecule type" value="mRNA"/>
</dbReference>
<dbReference type="RefSeq" id="NP_001106492.1">
    <property type="nucleotide sequence ID" value="NM_001113021.1"/>
</dbReference>
<dbReference type="SMR" id="A8WGF4"/>
<dbReference type="FunCoup" id="A8WGF4">
    <property type="interactions" value="897"/>
</dbReference>
<dbReference type="STRING" id="8364.ENSXETP00000048595"/>
<dbReference type="PaxDb" id="8364-ENSXETP00000003079"/>
<dbReference type="DNASU" id="100127681"/>
<dbReference type="GeneID" id="100127681"/>
<dbReference type="KEGG" id="xtr:100127681"/>
<dbReference type="AGR" id="Xenbase:XB-GENE-966865"/>
<dbReference type="CTD" id="55764"/>
<dbReference type="Xenbase" id="XB-GENE-966865">
    <property type="gene designation" value="ift122"/>
</dbReference>
<dbReference type="eggNOG" id="KOG1538">
    <property type="taxonomic scope" value="Eukaryota"/>
</dbReference>
<dbReference type="InParanoid" id="A8WGF4"/>
<dbReference type="OMA" id="GDSFDTW"/>
<dbReference type="OrthoDB" id="10255582at2759"/>
<dbReference type="Reactome" id="R-XTR-5610787">
    <property type="pathway name" value="Hedgehog 'off' state"/>
</dbReference>
<dbReference type="Proteomes" id="UP000008143">
    <property type="component" value="Chromosome 4"/>
</dbReference>
<dbReference type="Bgee" id="ENSXETG00000001463">
    <property type="expression patterns" value="Expressed in 2-cell stage embryo and 13 other cell types or tissues"/>
</dbReference>
<dbReference type="ExpressionAtlas" id="A8WGF4">
    <property type="expression patterns" value="baseline"/>
</dbReference>
<dbReference type="GO" id="GO:0036064">
    <property type="term" value="C:ciliary basal body"/>
    <property type="evidence" value="ECO:0000250"/>
    <property type="project" value="UniProtKB"/>
</dbReference>
<dbReference type="GO" id="GO:0005929">
    <property type="term" value="C:cilium"/>
    <property type="evidence" value="ECO:0000250"/>
    <property type="project" value="UniProtKB"/>
</dbReference>
<dbReference type="GO" id="GO:0005737">
    <property type="term" value="C:cytoplasm"/>
    <property type="evidence" value="ECO:0007669"/>
    <property type="project" value="UniProtKB-KW"/>
</dbReference>
<dbReference type="GO" id="GO:0030991">
    <property type="term" value="C:intraciliary transport particle A"/>
    <property type="evidence" value="ECO:0000250"/>
    <property type="project" value="UniProtKB"/>
</dbReference>
<dbReference type="GO" id="GO:0060271">
    <property type="term" value="P:cilium assembly"/>
    <property type="evidence" value="ECO:0000250"/>
    <property type="project" value="UniProtKB"/>
</dbReference>
<dbReference type="GO" id="GO:0035721">
    <property type="term" value="P:intraciliary retrograde transport"/>
    <property type="evidence" value="ECO:0000250"/>
    <property type="project" value="UniProtKB"/>
</dbReference>
<dbReference type="GO" id="GO:0042073">
    <property type="term" value="P:intraciliary transport"/>
    <property type="evidence" value="ECO:0000250"/>
    <property type="project" value="UniProtKB"/>
</dbReference>
<dbReference type="GO" id="GO:0045879">
    <property type="term" value="P:negative regulation of smoothened signaling pathway"/>
    <property type="evidence" value="ECO:0000250"/>
    <property type="project" value="UniProtKB"/>
</dbReference>
<dbReference type="GO" id="GO:0061512">
    <property type="term" value="P:protein localization to cilium"/>
    <property type="evidence" value="ECO:0000250"/>
    <property type="project" value="UniProtKB"/>
</dbReference>
<dbReference type="FunFam" id="1.25.40.470:FF:000005">
    <property type="entry name" value="Intraflagellar transport protein 122 homolog"/>
    <property type="match status" value="1"/>
</dbReference>
<dbReference type="FunFam" id="2.130.10.10:FF:000176">
    <property type="entry name" value="Intraflagellar transport protein 122 homolog"/>
    <property type="match status" value="1"/>
</dbReference>
<dbReference type="FunFam" id="1.25.40.470:FF:000003">
    <property type="entry name" value="intraflagellar transport protein 122 homolog"/>
    <property type="match status" value="1"/>
</dbReference>
<dbReference type="Gene3D" id="1.25.40.470">
    <property type="match status" value="2"/>
</dbReference>
<dbReference type="Gene3D" id="2.130.10.10">
    <property type="entry name" value="YVTN repeat-like/Quinoprotein amine dehydrogenase"/>
    <property type="match status" value="2"/>
</dbReference>
<dbReference type="InterPro" id="IPR056153">
    <property type="entry name" value="Beta-prop_IFT122_1st"/>
</dbReference>
<dbReference type="InterPro" id="IPR056152">
    <property type="entry name" value="Beta-prop_IFT122_2nd"/>
</dbReference>
<dbReference type="InterPro" id="IPR039857">
    <property type="entry name" value="Ift122/121"/>
</dbReference>
<dbReference type="InterPro" id="IPR011990">
    <property type="entry name" value="TPR-like_helical_dom_sf"/>
</dbReference>
<dbReference type="InterPro" id="IPR015943">
    <property type="entry name" value="WD40/YVTN_repeat-like_dom_sf"/>
</dbReference>
<dbReference type="InterPro" id="IPR036322">
    <property type="entry name" value="WD40_repeat_dom_sf"/>
</dbReference>
<dbReference type="InterPro" id="IPR001680">
    <property type="entry name" value="WD40_rpt"/>
</dbReference>
<dbReference type="InterPro" id="IPR056838">
    <property type="entry name" value="Zn_ribbon_IFT122"/>
</dbReference>
<dbReference type="PANTHER" id="PTHR12764:SF4">
    <property type="entry name" value="INTRAFLAGELLAR TRANSPORT PROTEIN 122 HOMOLOG"/>
    <property type="match status" value="1"/>
</dbReference>
<dbReference type="PANTHER" id="PTHR12764">
    <property type="entry name" value="WD REPEAT DOMAIN-RELATED"/>
    <property type="match status" value="1"/>
</dbReference>
<dbReference type="Pfam" id="PF23381">
    <property type="entry name" value="Beta-prop_IFT122_1st"/>
    <property type="match status" value="2"/>
</dbReference>
<dbReference type="Pfam" id="PF23377">
    <property type="entry name" value="Beta-prop_IFT122_2nd"/>
    <property type="match status" value="1"/>
</dbReference>
<dbReference type="Pfam" id="PF25295">
    <property type="entry name" value="TPR_IFT122"/>
    <property type="match status" value="1"/>
</dbReference>
<dbReference type="Pfam" id="PF25144">
    <property type="entry name" value="Zn_ribbon_IFT122"/>
    <property type="match status" value="1"/>
</dbReference>
<dbReference type="Pfam" id="PF25143">
    <property type="entry name" value="Zn_ribbon_IFT122_C"/>
    <property type="match status" value="1"/>
</dbReference>
<dbReference type="SMART" id="SM00320">
    <property type="entry name" value="WD40"/>
    <property type="match status" value="8"/>
</dbReference>
<dbReference type="SUPFAM" id="SSF48452">
    <property type="entry name" value="TPR-like"/>
    <property type="match status" value="1"/>
</dbReference>
<dbReference type="SUPFAM" id="SSF50978">
    <property type="entry name" value="WD40 repeat-like"/>
    <property type="match status" value="2"/>
</dbReference>
<dbReference type="PROSITE" id="PS50082">
    <property type="entry name" value="WD_REPEATS_2"/>
    <property type="match status" value="1"/>
</dbReference>
<dbReference type="PROSITE" id="PS50294">
    <property type="entry name" value="WD_REPEATS_REGION"/>
    <property type="match status" value="1"/>
</dbReference>
<keyword id="KW-0966">Cell projection</keyword>
<keyword id="KW-0969">Cilium</keyword>
<keyword id="KW-0970">Cilium biogenesis/degradation</keyword>
<keyword id="KW-0963">Cytoplasm</keyword>
<keyword id="KW-0206">Cytoskeleton</keyword>
<keyword id="KW-0217">Developmental protein</keyword>
<keyword id="KW-1185">Reference proteome</keyword>
<keyword id="KW-0677">Repeat</keyword>
<keyword id="KW-0853">WD repeat</keyword>
<reference key="1">
    <citation type="submission" date="2007-11" db="EMBL/GenBank/DDBJ databases">
        <authorList>
            <consortium name="NIH - Xenopus Gene Collection (XGC) project"/>
        </authorList>
    </citation>
    <scope>NUCLEOTIDE SEQUENCE [LARGE SCALE MRNA]</scope>
    <source>
        <tissue>Brain</tissue>
    </source>
</reference>